<accession>A5WA09</accession>
<proteinExistence type="inferred from homology"/>
<reference key="1">
    <citation type="submission" date="2007-05" db="EMBL/GenBank/DDBJ databases">
        <title>Complete sequence of Pseudomonas putida F1.</title>
        <authorList>
            <consortium name="US DOE Joint Genome Institute"/>
            <person name="Copeland A."/>
            <person name="Lucas S."/>
            <person name="Lapidus A."/>
            <person name="Barry K."/>
            <person name="Detter J.C."/>
            <person name="Glavina del Rio T."/>
            <person name="Hammon N."/>
            <person name="Israni S."/>
            <person name="Dalin E."/>
            <person name="Tice H."/>
            <person name="Pitluck S."/>
            <person name="Chain P."/>
            <person name="Malfatti S."/>
            <person name="Shin M."/>
            <person name="Vergez L."/>
            <person name="Schmutz J."/>
            <person name="Larimer F."/>
            <person name="Land M."/>
            <person name="Hauser L."/>
            <person name="Kyrpides N."/>
            <person name="Lykidis A."/>
            <person name="Parales R."/>
            <person name="Richardson P."/>
        </authorList>
    </citation>
    <scope>NUCLEOTIDE SEQUENCE [LARGE SCALE GENOMIC DNA]</scope>
    <source>
        <strain>ATCC 700007 / DSM 6899 / JCM 31910 / BCRC 17059 / LMG 24140 / F1</strain>
    </source>
</reference>
<name>SAHH_PSEP1</name>
<keyword id="KW-0963">Cytoplasm</keyword>
<keyword id="KW-0378">Hydrolase</keyword>
<keyword id="KW-0520">NAD</keyword>
<keyword id="KW-0554">One-carbon metabolism</keyword>
<organism>
    <name type="scientific">Pseudomonas putida (strain ATCC 700007 / DSM 6899 / JCM 31910 / BCRC 17059 / LMG 24140 / F1)</name>
    <dbReference type="NCBI Taxonomy" id="351746"/>
    <lineage>
        <taxon>Bacteria</taxon>
        <taxon>Pseudomonadati</taxon>
        <taxon>Pseudomonadota</taxon>
        <taxon>Gammaproteobacteria</taxon>
        <taxon>Pseudomonadales</taxon>
        <taxon>Pseudomonadaceae</taxon>
        <taxon>Pseudomonas</taxon>
    </lineage>
</organism>
<feature type="chain" id="PRO_1000024752" description="Adenosylhomocysteinase">
    <location>
        <begin position="1"/>
        <end position="469"/>
    </location>
</feature>
<feature type="binding site" evidence="1">
    <location>
        <position position="63"/>
    </location>
    <ligand>
        <name>substrate</name>
    </ligand>
</feature>
<feature type="binding site" evidence="1">
    <location>
        <position position="139"/>
    </location>
    <ligand>
        <name>substrate</name>
    </ligand>
</feature>
<feature type="binding site" evidence="1">
    <location>
        <position position="164"/>
    </location>
    <ligand>
        <name>substrate</name>
    </ligand>
</feature>
<feature type="binding site" evidence="1">
    <location>
        <begin position="165"/>
        <end position="167"/>
    </location>
    <ligand>
        <name>NAD(+)</name>
        <dbReference type="ChEBI" id="CHEBI:57540"/>
    </ligand>
</feature>
<feature type="binding site" evidence="1">
    <location>
        <position position="194"/>
    </location>
    <ligand>
        <name>substrate</name>
    </ligand>
</feature>
<feature type="binding site" evidence="1">
    <location>
        <position position="198"/>
    </location>
    <ligand>
        <name>substrate</name>
    </ligand>
</feature>
<feature type="binding site" evidence="1">
    <location>
        <position position="199"/>
    </location>
    <ligand>
        <name>NAD(+)</name>
        <dbReference type="ChEBI" id="CHEBI:57540"/>
    </ligand>
</feature>
<feature type="binding site" evidence="1">
    <location>
        <begin position="228"/>
        <end position="233"/>
    </location>
    <ligand>
        <name>NAD(+)</name>
        <dbReference type="ChEBI" id="CHEBI:57540"/>
    </ligand>
</feature>
<feature type="binding site" evidence="1">
    <location>
        <position position="251"/>
    </location>
    <ligand>
        <name>NAD(+)</name>
        <dbReference type="ChEBI" id="CHEBI:57540"/>
    </ligand>
</feature>
<feature type="binding site" evidence="1">
    <location>
        <position position="300"/>
    </location>
    <ligand>
        <name>NAD(+)</name>
        <dbReference type="ChEBI" id="CHEBI:57540"/>
    </ligand>
</feature>
<feature type="binding site" evidence="1">
    <location>
        <begin position="321"/>
        <end position="323"/>
    </location>
    <ligand>
        <name>NAD(+)</name>
        <dbReference type="ChEBI" id="CHEBI:57540"/>
    </ligand>
</feature>
<feature type="binding site" evidence="1">
    <location>
        <position position="375"/>
    </location>
    <ligand>
        <name>NAD(+)</name>
        <dbReference type="ChEBI" id="CHEBI:57540"/>
    </ligand>
</feature>
<comment type="function">
    <text evidence="1">May play a key role in the regulation of the intracellular concentration of adenosylhomocysteine.</text>
</comment>
<comment type="catalytic activity">
    <reaction evidence="1">
        <text>S-adenosyl-L-homocysteine + H2O = L-homocysteine + adenosine</text>
        <dbReference type="Rhea" id="RHEA:21708"/>
        <dbReference type="ChEBI" id="CHEBI:15377"/>
        <dbReference type="ChEBI" id="CHEBI:16335"/>
        <dbReference type="ChEBI" id="CHEBI:57856"/>
        <dbReference type="ChEBI" id="CHEBI:58199"/>
        <dbReference type="EC" id="3.13.2.1"/>
    </reaction>
</comment>
<comment type="cofactor">
    <cofactor evidence="1">
        <name>NAD(+)</name>
        <dbReference type="ChEBI" id="CHEBI:57540"/>
    </cofactor>
    <text evidence="1">Binds 1 NAD(+) per subunit.</text>
</comment>
<comment type="pathway">
    <text evidence="1">Amino-acid biosynthesis; L-homocysteine biosynthesis; L-homocysteine from S-adenosyl-L-homocysteine: step 1/1.</text>
</comment>
<comment type="subcellular location">
    <subcellularLocation>
        <location evidence="1">Cytoplasm</location>
    </subcellularLocation>
</comment>
<comment type="similarity">
    <text evidence="1">Belongs to the adenosylhomocysteinase family.</text>
</comment>
<gene>
    <name evidence="1" type="primary">ahcY</name>
    <name type="ordered locus">Pput_4849</name>
</gene>
<dbReference type="EC" id="3.13.2.1" evidence="1"/>
<dbReference type="EMBL" id="CP000712">
    <property type="protein sequence ID" value="ABQ80969.1"/>
    <property type="molecule type" value="Genomic_DNA"/>
</dbReference>
<dbReference type="SMR" id="A5WA09"/>
<dbReference type="KEGG" id="ppf:Pput_4849"/>
<dbReference type="eggNOG" id="COG0499">
    <property type="taxonomic scope" value="Bacteria"/>
</dbReference>
<dbReference type="HOGENOM" id="CLU_025194_2_1_6"/>
<dbReference type="UniPathway" id="UPA00314">
    <property type="reaction ID" value="UER00076"/>
</dbReference>
<dbReference type="GO" id="GO:0005829">
    <property type="term" value="C:cytosol"/>
    <property type="evidence" value="ECO:0007669"/>
    <property type="project" value="TreeGrafter"/>
</dbReference>
<dbReference type="GO" id="GO:0004013">
    <property type="term" value="F:adenosylhomocysteinase activity"/>
    <property type="evidence" value="ECO:0007669"/>
    <property type="project" value="UniProtKB-UniRule"/>
</dbReference>
<dbReference type="GO" id="GO:0071269">
    <property type="term" value="P:L-homocysteine biosynthetic process"/>
    <property type="evidence" value="ECO:0007669"/>
    <property type="project" value="UniProtKB-UniRule"/>
</dbReference>
<dbReference type="GO" id="GO:0006730">
    <property type="term" value="P:one-carbon metabolic process"/>
    <property type="evidence" value="ECO:0007669"/>
    <property type="project" value="UniProtKB-KW"/>
</dbReference>
<dbReference type="GO" id="GO:0033353">
    <property type="term" value="P:S-adenosylmethionine cycle"/>
    <property type="evidence" value="ECO:0007669"/>
    <property type="project" value="TreeGrafter"/>
</dbReference>
<dbReference type="CDD" id="cd00401">
    <property type="entry name" value="SAHH"/>
    <property type="match status" value="1"/>
</dbReference>
<dbReference type="FunFam" id="3.40.50.1480:FF:000006">
    <property type="entry name" value="Adenosylhomocysteinase"/>
    <property type="match status" value="1"/>
</dbReference>
<dbReference type="FunFam" id="3.40.50.1480:FF:000007">
    <property type="entry name" value="Adenosylhomocysteinase"/>
    <property type="match status" value="1"/>
</dbReference>
<dbReference type="FunFam" id="3.40.50.720:FF:000155">
    <property type="entry name" value="Adenosylhomocysteinase"/>
    <property type="match status" value="1"/>
</dbReference>
<dbReference type="Gene3D" id="3.40.50.1480">
    <property type="entry name" value="Adenosylhomocysteinase-like"/>
    <property type="match status" value="3"/>
</dbReference>
<dbReference type="Gene3D" id="3.40.50.720">
    <property type="entry name" value="NAD(P)-binding Rossmann-like Domain"/>
    <property type="match status" value="1"/>
</dbReference>
<dbReference type="HAMAP" id="MF_00563">
    <property type="entry name" value="AdoHcyase"/>
    <property type="match status" value="1"/>
</dbReference>
<dbReference type="InterPro" id="IPR042172">
    <property type="entry name" value="Adenosylhomocyst_ase-like_sf"/>
</dbReference>
<dbReference type="InterPro" id="IPR000043">
    <property type="entry name" value="Adenosylhomocysteinase-like"/>
</dbReference>
<dbReference type="InterPro" id="IPR015878">
    <property type="entry name" value="Ado_hCys_hydrolase_NAD-bd"/>
</dbReference>
<dbReference type="InterPro" id="IPR036291">
    <property type="entry name" value="NAD(P)-bd_dom_sf"/>
</dbReference>
<dbReference type="InterPro" id="IPR020082">
    <property type="entry name" value="S-Ado-L-homoCys_hydrolase_CS"/>
</dbReference>
<dbReference type="NCBIfam" id="TIGR00936">
    <property type="entry name" value="ahcY"/>
    <property type="match status" value="1"/>
</dbReference>
<dbReference type="NCBIfam" id="NF004005">
    <property type="entry name" value="PRK05476.2-3"/>
    <property type="match status" value="1"/>
</dbReference>
<dbReference type="PANTHER" id="PTHR23420">
    <property type="entry name" value="ADENOSYLHOMOCYSTEINASE"/>
    <property type="match status" value="1"/>
</dbReference>
<dbReference type="PANTHER" id="PTHR23420:SF0">
    <property type="entry name" value="ADENOSYLHOMOCYSTEINASE"/>
    <property type="match status" value="1"/>
</dbReference>
<dbReference type="Pfam" id="PF05221">
    <property type="entry name" value="AdoHcyase"/>
    <property type="match status" value="1"/>
</dbReference>
<dbReference type="Pfam" id="PF00670">
    <property type="entry name" value="AdoHcyase_NAD"/>
    <property type="match status" value="1"/>
</dbReference>
<dbReference type="PIRSF" id="PIRSF001109">
    <property type="entry name" value="Ad_hcy_hydrolase"/>
    <property type="match status" value="1"/>
</dbReference>
<dbReference type="SMART" id="SM00996">
    <property type="entry name" value="AdoHcyase"/>
    <property type="match status" value="1"/>
</dbReference>
<dbReference type="SMART" id="SM00997">
    <property type="entry name" value="AdoHcyase_NAD"/>
    <property type="match status" value="1"/>
</dbReference>
<dbReference type="SUPFAM" id="SSF52283">
    <property type="entry name" value="Formate/glycerate dehydrogenase catalytic domain-like"/>
    <property type="match status" value="1"/>
</dbReference>
<dbReference type="SUPFAM" id="SSF51735">
    <property type="entry name" value="NAD(P)-binding Rossmann-fold domains"/>
    <property type="match status" value="1"/>
</dbReference>
<dbReference type="PROSITE" id="PS00738">
    <property type="entry name" value="ADOHCYASE_1"/>
    <property type="match status" value="1"/>
</dbReference>
<dbReference type="PROSITE" id="PS00739">
    <property type="entry name" value="ADOHCYASE_2"/>
    <property type="match status" value="1"/>
</dbReference>
<evidence type="ECO:0000255" key="1">
    <source>
        <dbReference type="HAMAP-Rule" id="MF_00563"/>
    </source>
</evidence>
<protein>
    <recommendedName>
        <fullName evidence="1">Adenosylhomocysteinase</fullName>
        <ecNumber evidence="1">3.13.2.1</ecNumber>
    </recommendedName>
    <alternativeName>
        <fullName evidence="1">S-adenosyl-L-homocysteine hydrolase</fullName>
        <shortName evidence="1">AdoHcyase</shortName>
    </alternativeName>
</protein>
<sequence>MSAANMPAGFTDYKVADISLAAWGRRETIIAESEMPALMGLRRKYLAEQPLKGAKILGCIHMTIQTAVLIETLVALGAEVRWSSCNIFSTQDQAAASIAAAGIPVFAWKGETEEEYEWCLEQTILKDGQPWDANMILDDGGDLTELLHKKYPQVLDRVHGVTEETTTGVHRLLDMLAKGELKVPAINVNDSVTKSKNDNKYGCRHSLNDAIKRGTDHLLSGKQALVIGYGDVGKGSAQSLRQEGMIVKVSEVDPICAMQACMDGFELVSPFIDGINDGTEASIDKALLGKIDLIVTTTGNVNVCDANMLKALKKRAVVCNIGHFDNEIDTAFMRKNWAWEEVKPQVHKVHRTGAGSFDPQNDDYLILLAEGRLVNLGNATGHPSRIMDGSFANQVLAQIFLFEQKFADLPAEKKAERLTVEVLPKKLDEEVALEMVRGFGGVVTQLTKQQADYIGVTVEGPFKPHAYRY</sequence>